<keyword id="KW-0244">Early protein</keyword>
<keyword id="KW-0945">Host-virus interaction</keyword>
<keyword id="KW-1090">Inhibition of host innate immune response by virus</keyword>
<keyword id="KW-0899">Viral immunoevasion</keyword>
<gene>
    <name type="primary">OPG027</name>
    <name type="ORF">CMLV019</name>
</gene>
<organism>
    <name type="scientific">Camelpox virus (strain M-96)</name>
    <dbReference type="NCBI Taxonomy" id="203173"/>
    <lineage>
        <taxon>Viruses</taxon>
        <taxon>Varidnaviria</taxon>
        <taxon>Bamfordvirae</taxon>
        <taxon>Nucleocytoviricota</taxon>
        <taxon>Pokkesviricetes</taxon>
        <taxon>Chitovirales</taxon>
        <taxon>Poxviridae</taxon>
        <taxon>Chordopoxvirinae</taxon>
        <taxon>Orthopoxvirus</taxon>
        <taxon>Camelpox virus</taxon>
    </lineage>
</organism>
<comment type="function">
    <text evidence="1">Inhibits antiviral activity induced by type I interferons. Does not block signal transduction of IFN, but is important to counteract the host antiviral state induced by a pre-treatment with IFN (By similarity).</text>
</comment>
<comment type="induction">
    <text evidence="2">Expressed in the early phase of the viral replicative cycle.</text>
</comment>
<comment type="similarity">
    <text evidence="3">Belongs to the orthopoxvirus OPG027 family.</text>
</comment>
<sequence length="150" mass="18069">MGIQHEFDIIINGDIALRNLQLHRGDNYGCKLKIISNDYKKLKFRFIIRPDWSEIDEVKGLTVFANNYVVKVNKVDDTFYYVIYEAVIHLYNKKTEILIYSDDEKELFKHYYPYISLNMISKKYKVKEENYSSPYIEHPLIPYRDYESMD</sequence>
<accession>P68643</accession>
<accession>Q8V2Z8</accession>
<feature type="chain" id="PRO_0000099390" description="Probable host range protein 2">
    <location>
        <begin position="1"/>
        <end position="150"/>
    </location>
</feature>
<evidence type="ECO:0000250" key="1"/>
<evidence type="ECO:0000250" key="2">
    <source>
        <dbReference type="UniProtKB" id="P68600"/>
    </source>
</evidence>
<evidence type="ECO:0000305" key="3"/>
<protein>
    <recommendedName>
        <fullName>Probable host range protein 2</fullName>
    </recommendedName>
</protein>
<reference key="1">
    <citation type="journal article" date="2002" name="Virology">
        <title>The genome of camelpox virus.</title>
        <authorList>
            <person name="Afonso C.L."/>
            <person name="Tulman E.R."/>
            <person name="Lu Z."/>
            <person name="Zsak L."/>
            <person name="Sandybaev N.T."/>
            <person name="Kerembekova U.Z."/>
            <person name="Zaitsev V.L."/>
            <person name="Kutish G.F."/>
            <person name="Rock D.L."/>
        </authorList>
    </citation>
    <scope>NUCLEOTIDE SEQUENCE [LARGE SCALE GENOMIC DNA]</scope>
</reference>
<organismHost>
    <name type="scientific">Camelus</name>
    <dbReference type="NCBI Taxonomy" id="9836"/>
</organismHost>
<name>PG027_CAMPM</name>
<dbReference type="EMBL" id="AF438165">
    <property type="protein sequence ID" value="AAL73726.1"/>
    <property type="molecule type" value="Genomic_DNA"/>
</dbReference>
<dbReference type="RefSeq" id="NP_570409.1">
    <property type="nucleotide sequence ID" value="NC_003391.1"/>
</dbReference>
<dbReference type="SMR" id="P68643"/>
<dbReference type="KEGG" id="vg:932681"/>
<dbReference type="Proteomes" id="UP000152221">
    <property type="component" value="Genome"/>
</dbReference>
<dbReference type="GO" id="GO:0052170">
    <property type="term" value="P:symbiont-mediated suppression of host innate immune response"/>
    <property type="evidence" value="ECO:0007669"/>
    <property type="project" value="UniProtKB-KW"/>
</dbReference>
<dbReference type="GO" id="GO:0016032">
    <property type="term" value="P:viral process"/>
    <property type="evidence" value="ECO:0007669"/>
    <property type="project" value="InterPro"/>
</dbReference>
<dbReference type="InterPro" id="IPR004967">
    <property type="entry name" value="Poxvirus_C7/F8A"/>
</dbReference>
<dbReference type="Pfam" id="PF03287">
    <property type="entry name" value="Pox_C7_F8A"/>
    <property type="match status" value="1"/>
</dbReference>
<dbReference type="PIRSF" id="PIRSF003779">
    <property type="entry name" value="VAC_C7L"/>
    <property type="match status" value="1"/>
</dbReference>
<proteinExistence type="inferred from homology"/>